<protein>
    <recommendedName>
        <fullName evidence="1">Small ribosomal subunit protein uS13</fullName>
    </recommendedName>
    <alternativeName>
        <fullName evidence="3">30S ribosomal protein S13</fullName>
    </alternativeName>
</protein>
<name>RS13_CLOPS</name>
<feature type="chain" id="PRO_0000306590" description="Small ribosomal subunit protein uS13">
    <location>
        <begin position="1"/>
        <end position="121"/>
    </location>
</feature>
<feature type="region of interest" description="Disordered" evidence="2">
    <location>
        <begin position="93"/>
        <end position="121"/>
    </location>
</feature>
<evidence type="ECO:0000255" key="1">
    <source>
        <dbReference type="HAMAP-Rule" id="MF_01315"/>
    </source>
</evidence>
<evidence type="ECO:0000256" key="2">
    <source>
        <dbReference type="SAM" id="MobiDB-lite"/>
    </source>
</evidence>
<evidence type="ECO:0000305" key="3"/>
<keyword id="KW-0687">Ribonucleoprotein</keyword>
<keyword id="KW-0689">Ribosomal protein</keyword>
<keyword id="KW-0694">RNA-binding</keyword>
<keyword id="KW-0699">rRNA-binding</keyword>
<keyword id="KW-0820">tRNA-binding</keyword>
<accession>Q0SQH0</accession>
<gene>
    <name evidence="1" type="primary">rpsM</name>
    <name type="ordered locus">CPR_2373</name>
</gene>
<reference key="1">
    <citation type="journal article" date="2006" name="Genome Res.">
        <title>Skewed genomic variability in strains of the toxigenic bacterial pathogen, Clostridium perfringens.</title>
        <authorList>
            <person name="Myers G.S.A."/>
            <person name="Rasko D.A."/>
            <person name="Cheung J.K."/>
            <person name="Ravel J."/>
            <person name="Seshadri R."/>
            <person name="DeBoy R.T."/>
            <person name="Ren Q."/>
            <person name="Varga J."/>
            <person name="Awad M.M."/>
            <person name="Brinkac L.M."/>
            <person name="Daugherty S.C."/>
            <person name="Haft D.H."/>
            <person name="Dodson R.J."/>
            <person name="Madupu R."/>
            <person name="Nelson W.C."/>
            <person name="Rosovitz M.J."/>
            <person name="Sullivan S.A."/>
            <person name="Khouri H."/>
            <person name="Dimitrov G.I."/>
            <person name="Watkins K.L."/>
            <person name="Mulligan S."/>
            <person name="Benton J."/>
            <person name="Radune D."/>
            <person name="Fisher D.J."/>
            <person name="Atkins H.S."/>
            <person name="Hiscox T."/>
            <person name="Jost B.H."/>
            <person name="Billington S.J."/>
            <person name="Songer J.G."/>
            <person name="McClane B.A."/>
            <person name="Titball R.W."/>
            <person name="Rood J.I."/>
            <person name="Melville S.B."/>
            <person name="Paulsen I.T."/>
        </authorList>
    </citation>
    <scope>NUCLEOTIDE SEQUENCE [LARGE SCALE GENOMIC DNA]</scope>
    <source>
        <strain>SM101 / Type A</strain>
    </source>
</reference>
<sequence length="121" mass="13735">MARIAGIDLPREKRVEIGLTYIYGIGLPTSQKILEVTGVNPDTRVKDLTEEEVNSIRNYIKDLTVEGDLRREVALNIKRLVEIGSYRGIRHRKGLPLRGQKTKTNARTRKGPKKTIANKKK</sequence>
<comment type="function">
    <text evidence="1">Located at the top of the head of the 30S subunit, it contacts several helices of the 16S rRNA. In the 70S ribosome it contacts the 23S rRNA (bridge B1a) and protein L5 of the 50S subunit (bridge B1b), connecting the 2 subunits; these bridges are implicated in subunit movement. Contacts the tRNAs in the A and P-sites.</text>
</comment>
<comment type="subunit">
    <text evidence="1">Part of the 30S ribosomal subunit. Forms a loose heterodimer with protein S19. Forms two bridges to the 50S subunit in the 70S ribosome.</text>
</comment>
<comment type="similarity">
    <text evidence="1">Belongs to the universal ribosomal protein uS13 family.</text>
</comment>
<organism>
    <name type="scientific">Clostridium perfringens (strain SM101 / Type A)</name>
    <dbReference type="NCBI Taxonomy" id="289380"/>
    <lineage>
        <taxon>Bacteria</taxon>
        <taxon>Bacillati</taxon>
        <taxon>Bacillota</taxon>
        <taxon>Clostridia</taxon>
        <taxon>Eubacteriales</taxon>
        <taxon>Clostridiaceae</taxon>
        <taxon>Clostridium</taxon>
    </lineage>
</organism>
<dbReference type="EMBL" id="CP000312">
    <property type="protein sequence ID" value="ABG86809.1"/>
    <property type="molecule type" value="Genomic_DNA"/>
</dbReference>
<dbReference type="RefSeq" id="WP_003454489.1">
    <property type="nucleotide sequence ID" value="NZ_CAXVKH010000004.1"/>
</dbReference>
<dbReference type="SMR" id="Q0SQH0"/>
<dbReference type="GeneID" id="93001035"/>
<dbReference type="KEGG" id="cpr:CPR_2373"/>
<dbReference type="Proteomes" id="UP000001824">
    <property type="component" value="Chromosome"/>
</dbReference>
<dbReference type="GO" id="GO:0005829">
    <property type="term" value="C:cytosol"/>
    <property type="evidence" value="ECO:0007669"/>
    <property type="project" value="TreeGrafter"/>
</dbReference>
<dbReference type="GO" id="GO:0015935">
    <property type="term" value="C:small ribosomal subunit"/>
    <property type="evidence" value="ECO:0007669"/>
    <property type="project" value="TreeGrafter"/>
</dbReference>
<dbReference type="GO" id="GO:0019843">
    <property type="term" value="F:rRNA binding"/>
    <property type="evidence" value="ECO:0007669"/>
    <property type="project" value="UniProtKB-UniRule"/>
</dbReference>
<dbReference type="GO" id="GO:0003735">
    <property type="term" value="F:structural constituent of ribosome"/>
    <property type="evidence" value="ECO:0007669"/>
    <property type="project" value="InterPro"/>
</dbReference>
<dbReference type="GO" id="GO:0000049">
    <property type="term" value="F:tRNA binding"/>
    <property type="evidence" value="ECO:0007669"/>
    <property type="project" value="UniProtKB-UniRule"/>
</dbReference>
<dbReference type="GO" id="GO:0006412">
    <property type="term" value="P:translation"/>
    <property type="evidence" value="ECO:0007669"/>
    <property type="project" value="UniProtKB-UniRule"/>
</dbReference>
<dbReference type="FunFam" id="1.10.8.50:FF:000001">
    <property type="entry name" value="30S ribosomal protein S13"/>
    <property type="match status" value="1"/>
</dbReference>
<dbReference type="FunFam" id="4.10.910.10:FF:000001">
    <property type="entry name" value="30S ribosomal protein S13"/>
    <property type="match status" value="1"/>
</dbReference>
<dbReference type="Gene3D" id="1.10.8.50">
    <property type="match status" value="1"/>
</dbReference>
<dbReference type="Gene3D" id="4.10.910.10">
    <property type="entry name" value="30s ribosomal protein s13, domain 2"/>
    <property type="match status" value="1"/>
</dbReference>
<dbReference type="HAMAP" id="MF_01315">
    <property type="entry name" value="Ribosomal_uS13"/>
    <property type="match status" value="1"/>
</dbReference>
<dbReference type="InterPro" id="IPR027437">
    <property type="entry name" value="Rbsml_uS13_C"/>
</dbReference>
<dbReference type="InterPro" id="IPR001892">
    <property type="entry name" value="Ribosomal_uS13"/>
</dbReference>
<dbReference type="InterPro" id="IPR010979">
    <property type="entry name" value="Ribosomal_uS13-like_H2TH"/>
</dbReference>
<dbReference type="InterPro" id="IPR019980">
    <property type="entry name" value="Ribosomal_uS13_bac-type"/>
</dbReference>
<dbReference type="InterPro" id="IPR018269">
    <property type="entry name" value="Ribosomal_uS13_CS"/>
</dbReference>
<dbReference type="NCBIfam" id="TIGR03631">
    <property type="entry name" value="uS13_bact"/>
    <property type="match status" value="1"/>
</dbReference>
<dbReference type="PANTHER" id="PTHR10871">
    <property type="entry name" value="30S RIBOSOMAL PROTEIN S13/40S RIBOSOMAL PROTEIN S18"/>
    <property type="match status" value="1"/>
</dbReference>
<dbReference type="PANTHER" id="PTHR10871:SF1">
    <property type="entry name" value="SMALL RIBOSOMAL SUBUNIT PROTEIN US13M"/>
    <property type="match status" value="1"/>
</dbReference>
<dbReference type="Pfam" id="PF00416">
    <property type="entry name" value="Ribosomal_S13"/>
    <property type="match status" value="1"/>
</dbReference>
<dbReference type="PIRSF" id="PIRSF002134">
    <property type="entry name" value="Ribosomal_S13"/>
    <property type="match status" value="1"/>
</dbReference>
<dbReference type="SUPFAM" id="SSF46946">
    <property type="entry name" value="S13-like H2TH domain"/>
    <property type="match status" value="1"/>
</dbReference>
<dbReference type="PROSITE" id="PS00646">
    <property type="entry name" value="RIBOSOMAL_S13_1"/>
    <property type="match status" value="1"/>
</dbReference>
<dbReference type="PROSITE" id="PS50159">
    <property type="entry name" value="RIBOSOMAL_S13_2"/>
    <property type="match status" value="1"/>
</dbReference>
<proteinExistence type="inferred from homology"/>